<sequence>MQKQAELYRGKAKTVYSTENPDLLVLEFRNDTSAGDGARIEQFDRKGMVNNKFNHFIMTKLAEAGIPTQMERLLSDTECLVKKLEMVPVECVVRNRAAGSLVKRLGVEEGMELNPPIFDLFLKNDALHDPMVNSSYCETFGWVSQENLARMKELTYKANDVLKKLFDDAGLILVDFKLEFGLYKGEVVLGDEFSPDGSRLWDKETLDKMDKDRFRQSLGGLIEAYEAVAHRLGVKLD</sequence>
<feature type="chain" id="PRO_0000100865" description="Phosphoribosylaminoimidazole-succinocarboxamide synthase">
    <location>
        <begin position="1"/>
        <end position="237"/>
    </location>
</feature>
<reference key="1">
    <citation type="journal article" date="2001" name="Nature">
        <title>Complete genome sequence of a multiple drug resistant Salmonella enterica serovar Typhi CT18.</title>
        <authorList>
            <person name="Parkhill J."/>
            <person name="Dougan G."/>
            <person name="James K.D."/>
            <person name="Thomson N.R."/>
            <person name="Pickard D."/>
            <person name="Wain J."/>
            <person name="Churcher C.M."/>
            <person name="Mungall K.L."/>
            <person name="Bentley S.D."/>
            <person name="Holden M.T.G."/>
            <person name="Sebaihia M."/>
            <person name="Baker S."/>
            <person name="Basham D."/>
            <person name="Brooks K."/>
            <person name="Chillingworth T."/>
            <person name="Connerton P."/>
            <person name="Cronin A."/>
            <person name="Davis P."/>
            <person name="Davies R.M."/>
            <person name="Dowd L."/>
            <person name="White N."/>
            <person name="Farrar J."/>
            <person name="Feltwell T."/>
            <person name="Hamlin N."/>
            <person name="Haque A."/>
            <person name="Hien T.T."/>
            <person name="Holroyd S."/>
            <person name="Jagels K."/>
            <person name="Krogh A."/>
            <person name="Larsen T.S."/>
            <person name="Leather S."/>
            <person name="Moule S."/>
            <person name="O'Gaora P."/>
            <person name="Parry C."/>
            <person name="Quail M.A."/>
            <person name="Rutherford K.M."/>
            <person name="Simmonds M."/>
            <person name="Skelton J."/>
            <person name="Stevens K."/>
            <person name="Whitehead S."/>
            <person name="Barrell B.G."/>
        </authorList>
    </citation>
    <scope>NUCLEOTIDE SEQUENCE [LARGE SCALE GENOMIC DNA]</scope>
    <source>
        <strain>CT18</strain>
    </source>
</reference>
<reference key="2">
    <citation type="journal article" date="2003" name="J. Bacteriol.">
        <title>Comparative genomics of Salmonella enterica serovar Typhi strains Ty2 and CT18.</title>
        <authorList>
            <person name="Deng W."/>
            <person name="Liou S.-R."/>
            <person name="Plunkett G. III"/>
            <person name="Mayhew G.F."/>
            <person name="Rose D.J."/>
            <person name="Burland V."/>
            <person name="Kodoyianni V."/>
            <person name="Schwartz D.C."/>
            <person name="Blattner F.R."/>
        </authorList>
    </citation>
    <scope>NUCLEOTIDE SEQUENCE [LARGE SCALE GENOMIC DNA]</scope>
    <source>
        <strain>ATCC 700931 / Ty2</strain>
    </source>
</reference>
<evidence type="ECO:0000255" key="1">
    <source>
        <dbReference type="HAMAP-Rule" id="MF_00137"/>
    </source>
</evidence>
<keyword id="KW-0067">ATP-binding</keyword>
<keyword id="KW-0436">Ligase</keyword>
<keyword id="KW-0547">Nucleotide-binding</keyword>
<keyword id="KW-0658">Purine biosynthesis</keyword>
<accession>P65890</accession>
<accession>Q8XF69</accession>
<comment type="catalytic activity">
    <reaction evidence="1">
        <text>5-amino-1-(5-phospho-D-ribosyl)imidazole-4-carboxylate + L-aspartate + ATP = (2S)-2-[5-amino-1-(5-phospho-beta-D-ribosyl)imidazole-4-carboxamido]succinate + ADP + phosphate + 2 H(+)</text>
        <dbReference type="Rhea" id="RHEA:22628"/>
        <dbReference type="ChEBI" id="CHEBI:15378"/>
        <dbReference type="ChEBI" id="CHEBI:29991"/>
        <dbReference type="ChEBI" id="CHEBI:30616"/>
        <dbReference type="ChEBI" id="CHEBI:43474"/>
        <dbReference type="ChEBI" id="CHEBI:58443"/>
        <dbReference type="ChEBI" id="CHEBI:77657"/>
        <dbReference type="ChEBI" id="CHEBI:456216"/>
        <dbReference type="EC" id="6.3.2.6"/>
    </reaction>
</comment>
<comment type="pathway">
    <text evidence="1">Purine metabolism; IMP biosynthesis via de novo pathway; 5-amino-1-(5-phospho-D-ribosyl)imidazole-4-carboxamide from 5-amino-1-(5-phospho-D-ribosyl)imidazole-4-carboxylate: step 1/2.</text>
</comment>
<comment type="similarity">
    <text evidence="1">Belongs to the SAICAR synthetase family.</text>
</comment>
<gene>
    <name evidence="1" type="primary">purC</name>
    <name type="ordered locus">STY2725</name>
    <name type="ordered locus">t0372</name>
</gene>
<dbReference type="EC" id="6.3.2.6" evidence="1"/>
<dbReference type="EMBL" id="AL513382">
    <property type="protein sequence ID" value="CAD02687.1"/>
    <property type="molecule type" value="Genomic_DNA"/>
</dbReference>
<dbReference type="EMBL" id="AE014613">
    <property type="protein sequence ID" value="AAO68090.1"/>
    <property type="molecule type" value="Genomic_DNA"/>
</dbReference>
<dbReference type="RefSeq" id="NP_457021.1">
    <property type="nucleotide sequence ID" value="NC_003198.1"/>
</dbReference>
<dbReference type="RefSeq" id="WP_001171630.1">
    <property type="nucleotide sequence ID" value="NZ_WSUR01000007.1"/>
</dbReference>
<dbReference type="SMR" id="P65890"/>
<dbReference type="STRING" id="220341.gene:17586621"/>
<dbReference type="KEGG" id="stt:t0372"/>
<dbReference type="KEGG" id="sty:STY2725"/>
<dbReference type="PATRIC" id="fig|220341.7.peg.2763"/>
<dbReference type="eggNOG" id="COG0152">
    <property type="taxonomic scope" value="Bacteria"/>
</dbReference>
<dbReference type="HOGENOM" id="CLU_061495_2_1_6"/>
<dbReference type="OMA" id="EFCYKND"/>
<dbReference type="OrthoDB" id="9801549at2"/>
<dbReference type="UniPathway" id="UPA00074">
    <property type="reaction ID" value="UER00131"/>
</dbReference>
<dbReference type="Proteomes" id="UP000000541">
    <property type="component" value="Chromosome"/>
</dbReference>
<dbReference type="Proteomes" id="UP000002670">
    <property type="component" value="Chromosome"/>
</dbReference>
<dbReference type="GO" id="GO:0005829">
    <property type="term" value="C:cytosol"/>
    <property type="evidence" value="ECO:0007669"/>
    <property type="project" value="TreeGrafter"/>
</dbReference>
<dbReference type="GO" id="GO:0005524">
    <property type="term" value="F:ATP binding"/>
    <property type="evidence" value="ECO:0007669"/>
    <property type="project" value="UniProtKB-KW"/>
</dbReference>
<dbReference type="GO" id="GO:0004639">
    <property type="term" value="F:phosphoribosylaminoimidazolesuccinocarboxamide synthase activity"/>
    <property type="evidence" value="ECO:0007669"/>
    <property type="project" value="UniProtKB-UniRule"/>
</dbReference>
<dbReference type="GO" id="GO:0006189">
    <property type="term" value="P:'de novo' IMP biosynthetic process"/>
    <property type="evidence" value="ECO:0007669"/>
    <property type="project" value="UniProtKB-UniRule"/>
</dbReference>
<dbReference type="GO" id="GO:0009236">
    <property type="term" value="P:cobalamin biosynthetic process"/>
    <property type="evidence" value="ECO:0007669"/>
    <property type="project" value="InterPro"/>
</dbReference>
<dbReference type="CDD" id="cd01415">
    <property type="entry name" value="SAICAR_synt_PurC"/>
    <property type="match status" value="1"/>
</dbReference>
<dbReference type="FunFam" id="3.30.200.20:FF:000086">
    <property type="entry name" value="Phosphoribosylaminoimidazole-succinocarboxamide synthase"/>
    <property type="match status" value="1"/>
</dbReference>
<dbReference type="FunFam" id="3.30.470.20:FF:000006">
    <property type="entry name" value="Phosphoribosylaminoimidazole-succinocarboxamide synthase"/>
    <property type="match status" value="1"/>
</dbReference>
<dbReference type="Gene3D" id="3.30.470.20">
    <property type="entry name" value="ATP-grasp fold, B domain"/>
    <property type="match status" value="1"/>
</dbReference>
<dbReference type="Gene3D" id="3.30.200.20">
    <property type="entry name" value="Phosphorylase Kinase, domain 1"/>
    <property type="match status" value="1"/>
</dbReference>
<dbReference type="HAMAP" id="MF_00137">
    <property type="entry name" value="SAICAR_synth"/>
    <property type="match status" value="1"/>
</dbReference>
<dbReference type="InterPro" id="IPR028923">
    <property type="entry name" value="SAICAR_synt/ADE2_N"/>
</dbReference>
<dbReference type="InterPro" id="IPR033934">
    <property type="entry name" value="SAICAR_synt_PurC"/>
</dbReference>
<dbReference type="InterPro" id="IPR001636">
    <property type="entry name" value="SAICAR_synth"/>
</dbReference>
<dbReference type="InterPro" id="IPR050089">
    <property type="entry name" value="SAICAR_synthetase"/>
</dbReference>
<dbReference type="InterPro" id="IPR018236">
    <property type="entry name" value="SAICAR_synthetase_CS"/>
</dbReference>
<dbReference type="NCBIfam" id="TIGR00081">
    <property type="entry name" value="purC"/>
    <property type="match status" value="1"/>
</dbReference>
<dbReference type="PANTHER" id="PTHR43599">
    <property type="entry name" value="MULTIFUNCTIONAL PROTEIN ADE2"/>
    <property type="match status" value="1"/>
</dbReference>
<dbReference type="PANTHER" id="PTHR43599:SF3">
    <property type="entry name" value="SI:DKEY-6E2.2"/>
    <property type="match status" value="1"/>
</dbReference>
<dbReference type="Pfam" id="PF01259">
    <property type="entry name" value="SAICAR_synt"/>
    <property type="match status" value="1"/>
</dbReference>
<dbReference type="SUPFAM" id="SSF56104">
    <property type="entry name" value="SAICAR synthase-like"/>
    <property type="match status" value="1"/>
</dbReference>
<dbReference type="PROSITE" id="PS01057">
    <property type="entry name" value="SAICAR_SYNTHETASE_1"/>
    <property type="match status" value="1"/>
</dbReference>
<dbReference type="PROSITE" id="PS01058">
    <property type="entry name" value="SAICAR_SYNTHETASE_2"/>
    <property type="match status" value="1"/>
</dbReference>
<protein>
    <recommendedName>
        <fullName evidence="1">Phosphoribosylaminoimidazole-succinocarboxamide synthase</fullName>
        <ecNumber evidence="1">6.3.2.6</ecNumber>
    </recommendedName>
    <alternativeName>
        <fullName evidence="1">SAICAR synthetase</fullName>
    </alternativeName>
</protein>
<organism>
    <name type="scientific">Salmonella typhi</name>
    <dbReference type="NCBI Taxonomy" id="90370"/>
    <lineage>
        <taxon>Bacteria</taxon>
        <taxon>Pseudomonadati</taxon>
        <taxon>Pseudomonadota</taxon>
        <taxon>Gammaproteobacteria</taxon>
        <taxon>Enterobacterales</taxon>
        <taxon>Enterobacteriaceae</taxon>
        <taxon>Salmonella</taxon>
    </lineage>
</organism>
<proteinExistence type="inferred from homology"/>
<name>PUR7_SALTI</name>